<dbReference type="EMBL" id="AL596173">
    <property type="protein sequence ID" value="CAC98008.1"/>
    <property type="molecule type" value="Genomic_DNA"/>
</dbReference>
<dbReference type="PIR" id="AH1779">
    <property type="entry name" value="AH1779"/>
</dbReference>
<dbReference type="RefSeq" id="WP_003720954.1">
    <property type="nucleotide sequence ID" value="NC_003212.1"/>
</dbReference>
<dbReference type="SMR" id="P66331"/>
<dbReference type="STRING" id="272626.gene:17567169"/>
<dbReference type="GeneID" id="93240514"/>
<dbReference type="KEGG" id="lin:rpsJ"/>
<dbReference type="eggNOG" id="COG0051">
    <property type="taxonomic scope" value="Bacteria"/>
</dbReference>
<dbReference type="HOGENOM" id="CLU_122625_1_3_9"/>
<dbReference type="OrthoDB" id="9804464at2"/>
<dbReference type="Proteomes" id="UP000002513">
    <property type="component" value="Chromosome"/>
</dbReference>
<dbReference type="GO" id="GO:1990904">
    <property type="term" value="C:ribonucleoprotein complex"/>
    <property type="evidence" value="ECO:0007669"/>
    <property type="project" value="UniProtKB-KW"/>
</dbReference>
<dbReference type="GO" id="GO:0005840">
    <property type="term" value="C:ribosome"/>
    <property type="evidence" value="ECO:0007669"/>
    <property type="project" value="UniProtKB-KW"/>
</dbReference>
<dbReference type="GO" id="GO:0003735">
    <property type="term" value="F:structural constituent of ribosome"/>
    <property type="evidence" value="ECO:0007669"/>
    <property type="project" value="InterPro"/>
</dbReference>
<dbReference type="GO" id="GO:0000049">
    <property type="term" value="F:tRNA binding"/>
    <property type="evidence" value="ECO:0007669"/>
    <property type="project" value="UniProtKB-UniRule"/>
</dbReference>
<dbReference type="GO" id="GO:0006412">
    <property type="term" value="P:translation"/>
    <property type="evidence" value="ECO:0007669"/>
    <property type="project" value="UniProtKB-UniRule"/>
</dbReference>
<dbReference type="FunFam" id="3.30.70.600:FF:000001">
    <property type="entry name" value="30S ribosomal protein S10"/>
    <property type="match status" value="1"/>
</dbReference>
<dbReference type="Gene3D" id="3.30.70.600">
    <property type="entry name" value="Ribosomal protein S10 domain"/>
    <property type="match status" value="1"/>
</dbReference>
<dbReference type="HAMAP" id="MF_00508">
    <property type="entry name" value="Ribosomal_uS10"/>
    <property type="match status" value="1"/>
</dbReference>
<dbReference type="InterPro" id="IPR001848">
    <property type="entry name" value="Ribosomal_uS10"/>
</dbReference>
<dbReference type="InterPro" id="IPR018268">
    <property type="entry name" value="Ribosomal_uS10_CS"/>
</dbReference>
<dbReference type="InterPro" id="IPR027486">
    <property type="entry name" value="Ribosomal_uS10_dom"/>
</dbReference>
<dbReference type="InterPro" id="IPR036838">
    <property type="entry name" value="Ribosomal_uS10_dom_sf"/>
</dbReference>
<dbReference type="NCBIfam" id="NF001861">
    <property type="entry name" value="PRK00596.1"/>
    <property type="match status" value="1"/>
</dbReference>
<dbReference type="NCBIfam" id="TIGR01049">
    <property type="entry name" value="rpsJ_bact"/>
    <property type="match status" value="1"/>
</dbReference>
<dbReference type="PANTHER" id="PTHR11700">
    <property type="entry name" value="30S RIBOSOMAL PROTEIN S10 FAMILY MEMBER"/>
    <property type="match status" value="1"/>
</dbReference>
<dbReference type="Pfam" id="PF00338">
    <property type="entry name" value="Ribosomal_S10"/>
    <property type="match status" value="1"/>
</dbReference>
<dbReference type="PRINTS" id="PR00971">
    <property type="entry name" value="RIBOSOMALS10"/>
</dbReference>
<dbReference type="SMART" id="SM01403">
    <property type="entry name" value="Ribosomal_S10"/>
    <property type="match status" value="1"/>
</dbReference>
<dbReference type="SUPFAM" id="SSF54999">
    <property type="entry name" value="Ribosomal protein S10"/>
    <property type="match status" value="1"/>
</dbReference>
<dbReference type="PROSITE" id="PS00361">
    <property type="entry name" value="RIBOSOMAL_S10"/>
    <property type="match status" value="1"/>
</dbReference>
<sequence length="102" mass="11682">MAKQKIRIRLKAYDHRILDQSAEKIVETAKRSGASVSGPIPLPTEKSIYTVLRAVHKYKDSREQFEMRTHKRLIDIVNPTPQTVDSLMRLDLPSGVDIEIKL</sequence>
<protein>
    <recommendedName>
        <fullName evidence="1">Small ribosomal subunit protein uS10</fullName>
    </recommendedName>
    <alternativeName>
        <fullName evidence="2">30S ribosomal protein S10</fullName>
    </alternativeName>
</protein>
<proteinExistence type="inferred from homology"/>
<evidence type="ECO:0000255" key="1">
    <source>
        <dbReference type="HAMAP-Rule" id="MF_00508"/>
    </source>
</evidence>
<evidence type="ECO:0000305" key="2"/>
<keyword id="KW-0687">Ribonucleoprotein</keyword>
<keyword id="KW-0689">Ribosomal protein</keyword>
<comment type="function">
    <text evidence="1">Involved in the binding of tRNA to the ribosomes.</text>
</comment>
<comment type="subunit">
    <text evidence="1">Part of the 30S ribosomal subunit.</text>
</comment>
<comment type="similarity">
    <text evidence="1">Belongs to the universal ribosomal protein uS10 family.</text>
</comment>
<gene>
    <name evidence="1" type="primary">rpsJ</name>
    <name type="ordered locus">lin2782</name>
</gene>
<name>RS10_LISIN</name>
<organism>
    <name type="scientific">Listeria innocua serovar 6a (strain ATCC BAA-680 / CLIP 11262)</name>
    <dbReference type="NCBI Taxonomy" id="272626"/>
    <lineage>
        <taxon>Bacteria</taxon>
        <taxon>Bacillati</taxon>
        <taxon>Bacillota</taxon>
        <taxon>Bacilli</taxon>
        <taxon>Bacillales</taxon>
        <taxon>Listeriaceae</taxon>
        <taxon>Listeria</taxon>
    </lineage>
</organism>
<reference key="1">
    <citation type="journal article" date="2001" name="Science">
        <title>Comparative genomics of Listeria species.</title>
        <authorList>
            <person name="Glaser P."/>
            <person name="Frangeul L."/>
            <person name="Buchrieser C."/>
            <person name="Rusniok C."/>
            <person name="Amend A."/>
            <person name="Baquero F."/>
            <person name="Berche P."/>
            <person name="Bloecker H."/>
            <person name="Brandt P."/>
            <person name="Chakraborty T."/>
            <person name="Charbit A."/>
            <person name="Chetouani F."/>
            <person name="Couve E."/>
            <person name="de Daruvar A."/>
            <person name="Dehoux P."/>
            <person name="Domann E."/>
            <person name="Dominguez-Bernal G."/>
            <person name="Duchaud E."/>
            <person name="Durant L."/>
            <person name="Dussurget O."/>
            <person name="Entian K.-D."/>
            <person name="Fsihi H."/>
            <person name="Garcia-del Portillo F."/>
            <person name="Garrido P."/>
            <person name="Gautier L."/>
            <person name="Goebel W."/>
            <person name="Gomez-Lopez N."/>
            <person name="Hain T."/>
            <person name="Hauf J."/>
            <person name="Jackson D."/>
            <person name="Jones L.-M."/>
            <person name="Kaerst U."/>
            <person name="Kreft J."/>
            <person name="Kuhn M."/>
            <person name="Kunst F."/>
            <person name="Kurapkat G."/>
            <person name="Madueno E."/>
            <person name="Maitournam A."/>
            <person name="Mata Vicente J."/>
            <person name="Ng E."/>
            <person name="Nedjari H."/>
            <person name="Nordsiek G."/>
            <person name="Novella S."/>
            <person name="de Pablos B."/>
            <person name="Perez-Diaz J.-C."/>
            <person name="Purcell R."/>
            <person name="Remmel B."/>
            <person name="Rose M."/>
            <person name="Schlueter T."/>
            <person name="Simoes N."/>
            <person name="Tierrez A."/>
            <person name="Vazquez-Boland J.-A."/>
            <person name="Voss H."/>
            <person name="Wehland J."/>
            <person name="Cossart P."/>
        </authorList>
    </citation>
    <scope>NUCLEOTIDE SEQUENCE [LARGE SCALE GENOMIC DNA]</scope>
    <source>
        <strain>ATCC BAA-680 / CLIP 11262</strain>
    </source>
</reference>
<feature type="chain" id="PRO_0000146548" description="Small ribosomal subunit protein uS10">
    <location>
        <begin position="1"/>
        <end position="102"/>
    </location>
</feature>
<accession>P66331</accession>
<accession>Q927K6</accession>